<sequence>MIQAAKIIGTGLATTGLIGAGVGIGVVFGALILGVARNPSLRGLLFSYAILGFAFSEATGLFALMMAFLLLYVA</sequence>
<proteinExistence type="inferred from homology"/>
<reference key="1">
    <citation type="journal article" date="1992" name="Curr. Genet.">
        <title>Mitochondrial DNA sequence analysis of the cytochrome oxidase subunit I and II genes, the ATPase9 gene, the NADH dehydrogenase ND4L and ND5 gene complex, and the glutaminyl, methionyl and arginyl tRNA genes from Trichophyton rubrum.</title>
        <authorList>
            <person name="de Bievre C."/>
            <person name="Dujon B."/>
        </authorList>
    </citation>
    <scope>NUCLEOTIDE SEQUENCE [GENOMIC DNA]</scope>
    <source>
        <strain>IP 1817.89</strain>
    </source>
</reference>
<keyword id="KW-0138">CF(0)</keyword>
<keyword id="KW-0375">Hydrogen ion transport</keyword>
<keyword id="KW-0406">Ion transport</keyword>
<keyword id="KW-0446">Lipid-binding</keyword>
<keyword id="KW-0472">Membrane</keyword>
<keyword id="KW-0496">Mitochondrion</keyword>
<keyword id="KW-0812">Transmembrane</keyword>
<keyword id="KW-1133">Transmembrane helix</keyword>
<keyword id="KW-0813">Transport</keyword>
<dbReference type="EMBL" id="X65223">
    <property type="protein sequence ID" value="CAA46326.1"/>
    <property type="molecule type" value="Genomic_DNA"/>
</dbReference>
<dbReference type="PIR" id="S26943">
    <property type="entry name" value="S26943"/>
</dbReference>
<dbReference type="SMR" id="Q01554"/>
<dbReference type="GO" id="GO:0031966">
    <property type="term" value="C:mitochondrial membrane"/>
    <property type="evidence" value="ECO:0007669"/>
    <property type="project" value="UniProtKB-SubCell"/>
</dbReference>
<dbReference type="GO" id="GO:0045259">
    <property type="term" value="C:proton-transporting ATP synthase complex"/>
    <property type="evidence" value="ECO:0007669"/>
    <property type="project" value="UniProtKB-KW"/>
</dbReference>
<dbReference type="GO" id="GO:0033177">
    <property type="term" value="C:proton-transporting two-sector ATPase complex, proton-transporting domain"/>
    <property type="evidence" value="ECO:0007669"/>
    <property type="project" value="InterPro"/>
</dbReference>
<dbReference type="GO" id="GO:0008289">
    <property type="term" value="F:lipid binding"/>
    <property type="evidence" value="ECO:0007669"/>
    <property type="project" value="UniProtKB-KW"/>
</dbReference>
<dbReference type="GO" id="GO:0015078">
    <property type="term" value="F:proton transmembrane transporter activity"/>
    <property type="evidence" value="ECO:0007669"/>
    <property type="project" value="InterPro"/>
</dbReference>
<dbReference type="GO" id="GO:0015986">
    <property type="term" value="P:proton motive force-driven ATP synthesis"/>
    <property type="evidence" value="ECO:0007669"/>
    <property type="project" value="InterPro"/>
</dbReference>
<dbReference type="CDD" id="cd18182">
    <property type="entry name" value="ATP-synt_Fo_c_ATP5G3"/>
    <property type="match status" value="1"/>
</dbReference>
<dbReference type="FunFam" id="1.20.20.10:FF:000009">
    <property type="entry name" value="ATP synthase subunit 9, mitochondrial"/>
    <property type="match status" value="1"/>
</dbReference>
<dbReference type="Gene3D" id="1.20.20.10">
    <property type="entry name" value="F1F0 ATP synthase subunit C"/>
    <property type="match status" value="1"/>
</dbReference>
<dbReference type="HAMAP" id="MF_01396">
    <property type="entry name" value="ATP_synth_c_bact"/>
    <property type="match status" value="1"/>
</dbReference>
<dbReference type="InterPro" id="IPR000454">
    <property type="entry name" value="ATP_synth_F0_csu"/>
</dbReference>
<dbReference type="InterPro" id="IPR020537">
    <property type="entry name" value="ATP_synth_F0_csu_DDCD_BS"/>
</dbReference>
<dbReference type="InterPro" id="IPR038662">
    <property type="entry name" value="ATP_synth_F0_csu_sf"/>
</dbReference>
<dbReference type="InterPro" id="IPR002379">
    <property type="entry name" value="ATPase_proteolipid_c-like_dom"/>
</dbReference>
<dbReference type="InterPro" id="IPR035921">
    <property type="entry name" value="F/V-ATP_Csub_sf"/>
</dbReference>
<dbReference type="PANTHER" id="PTHR10031">
    <property type="entry name" value="ATP SYNTHASE LIPID-BINDING PROTEIN, MITOCHONDRIAL"/>
    <property type="match status" value="1"/>
</dbReference>
<dbReference type="PANTHER" id="PTHR10031:SF0">
    <property type="entry name" value="ATPASE PROTEIN 9"/>
    <property type="match status" value="1"/>
</dbReference>
<dbReference type="Pfam" id="PF00137">
    <property type="entry name" value="ATP-synt_C"/>
    <property type="match status" value="1"/>
</dbReference>
<dbReference type="PRINTS" id="PR00124">
    <property type="entry name" value="ATPASEC"/>
</dbReference>
<dbReference type="SUPFAM" id="SSF81333">
    <property type="entry name" value="F1F0 ATP synthase subunit C"/>
    <property type="match status" value="1"/>
</dbReference>
<dbReference type="PROSITE" id="PS00605">
    <property type="entry name" value="ATPASE_C"/>
    <property type="match status" value="1"/>
</dbReference>
<evidence type="ECO:0000250" key="1"/>
<evidence type="ECO:0000255" key="2"/>
<evidence type="ECO:0000305" key="3"/>
<name>ATP9_TRIRU</name>
<protein>
    <recommendedName>
        <fullName>ATP synthase subunit 9, mitochondrial</fullName>
    </recommendedName>
    <alternativeName>
        <fullName>Lipid-binding protein</fullName>
    </alternativeName>
</protein>
<gene>
    <name type="primary">ATP9</name>
</gene>
<comment type="function">
    <text>Mitochondrial membrane ATP synthase (F(1)F(0) ATP synthase or Complex V) produces ATP from ADP in the presence of a proton gradient across the membrane which is generated by electron transport complexes of the respiratory chain. F-type ATPases consist of two structural domains, F(1) - containing the extramembraneous catalytic core and F(0) - containing the membrane proton channel, linked together by a central stalk and a peripheral stalk. During catalysis, ATP synthesis in the catalytic domain of F(1) is coupled via a rotary mechanism of the central stalk subunits to proton translocation. Part of the complex F(0) domain. A homomeric c-ring of probably 10 subunits is part of the complex rotary element.</text>
</comment>
<comment type="subunit">
    <text>F-type ATPases have 2 components, CF(1) - the catalytic core - and CF(0) - the membrane proton channel. CF(1) has five subunits: alpha(3), beta(3), gamma(1), delta(1), epsilon(1). CF(0) has three main subunits: a, b and c.</text>
</comment>
<comment type="subcellular location">
    <subcellularLocation>
        <location evidence="3">Mitochondrion membrane</location>
        <topology evidence="3">Multi-pass membrane protein</topology>
    </subcellularLocation>
</comment>
<comment type="similarity">
    <text evidence="3">Belongs to the ATPase C chain family.</text>
</comment>
<geneLocation type="mitochondrion"/>
<accession>Q01554</accession>
<feature type="chain" id="PRO_0000112236" description="ATP synthase subunit 9, mitochondrial">
    <location>
        <begin position="1"/>
        <end position="74"/>
    </location>
</feature>
<feature type="transmembrane region" description="Helical" evidence="2">
    <location>
        <begin position="16"/>
        <end position="36"/>
    </location>
</feature>
<feature type="transmembrane region" description="Helical" evidence="2">
    <location>
        <begin position="50"/>
        <end position="70"/>
    </location>
</feature>
<feature type="site" description="Reversibly protonated during proton transport" evidence="1">
    <location>
        <position position="57"/>
    </location>
</feature>
<organism>
    <name type="scientific">Trichophyton rubrum</name>
    <name type="common">Athlete's foot fungus</name>
    <name type="synonym">Epidermophyton rubrum</name>
    <dbReference type="NCBI Taxonomy" id="5551"/>
    <lineage>
        <taxon>Eukaryota</taxon>
        <taxon>Fungi</taxon>
        <taxon>Dikarya</taxon>
        <taxon>Ascomycota</taxon>
        <taxon>Pezizomycotina</taxon>
        <taxon>Eurotiomycetes</taxon>
        <taxon>Eurotiomycetidae</taxon>
        <taxon>Onygenales</taxon>
        <taxon>Arthrodermataceae</taxon>
        <taxon>Trichophyton</taxon>
    </lineage>
</organism>